<dbReference type="EC" id="2.7.7.2" evidence="1"/>
<dbReference type="EMBL" id="CP002278">
    <property type="protein sequence ID" value="ADP77958.1"/>
    <property type="molecule type" value="Genomic_DNA"/>
</dbReference>
<dbReference type="SMR" id="E3GWN9"/>
<dbReference type="STRING" id="523846.Mfer_1172"/>
<dbReference type="KEGG" id="mfv:Mfer_1172"/>
<dbReference type="HOGENOM" id="CLU_034585_2_1_2"/>
<dbReference type="OrthoDB" id="1912at2157"/>
<dbReference type="UniPathway" id="UPA00277">
    <property type="reaction ID" value="UER00407"/>
</dbReference>
<dbReference type="Proteomes" id="UP000002315">
    <property type="component" value="Chromosome"/>
</dbReference>
<dbReference type="GO" id="GO:0005524">
    <property type="term" value="F:ATP binding"/>
    <property type="evidence" value="ECO:0007669"/>
    <property type="project" value="UniProtKB-UniRule"/>
</dbReference>
<dbReference type="GO" id="GO:0003919">
    <property type="term" value="F:FMN adenylyltransferase activity"/>
    <property type="evidence" value="ECO:0007669"/>
    <property type="project" value="UniProtKB-UniRule"/>
</dbReference>
<dbReference type="GO" id="GO:0006747">
    <property type="term" value="P:FAD biosynthetic process"/>
    <property type="evidence" value="ECO:0007669"/>
    <property type="project" value="UniProtKB-UniRule"/>
</dbReference>
<dbReference type="GO" id="GO:0046444">
    <property type="term" value="P:FMN metabolic process"/>
    <property type="evidence" value="ECO:0007669"/>
    <property type="project" value="UniProtKB-UniRule"/>
</dbReference>
<dbReference type="Gene3D" id="3.40.50.620">
    <property type="entry name" value="HUPs"/>
    <property type="match status" value="1"/>
</dbReference>
<dbReference type="HAMAP" id="MF_02115">
    <property type="entry name" value="FAD_synth_arch"/>
    <property type="match status" value="1"/>
</dbReference>
<dbReference type="InterPro" id="IPR050385">
    <property type="entry name" value="Archaeal_FAD_synthase"/>
</dbReference>
<dbReference type="InterPro" id="IPR004821">
    <property type="entry name" value="Cyt_trans-like"/>
</dbReference>
<dbReference type="InterPro" id="IPR024902">
    <property type="entry name" value="FAD_synth_RibL"/>
</dbReference>
<dbReference type="InterPro" id="IPR014729">
    <property type="entry name" value="Rossmann-like_a/b/a_fold"/>
</dbReference>
<dbReference type="NCBIfam" id="TIGR00125">
    <property type="entry name" value="cyt_tran_rel"/>
    <property type="match status" value="1"/>
</dbReference>
<dbReference type="PANTHER" id="PTHR43793">
    <property type="entry name" value="FAD SYNTHASE"/>
    <property type="match status" value="1"/>
</dbReference>
<dbReference type="PANTHER" id="PTHR43793:SF1">
    <property type="entry name" value="FAD SYNTHASE"/>
    <property type="match status" value="1"/>
</dbReference>
<dbReference type="Pfam" id="PF01467">
    <property type="entry name" value="CTP_transf_like"/>
    <property type="match status" value="1"/>
</dbReference>
<dbReference type="SUPFAM" id="SSF52374">
    <property type="entry name" value="Nucleotidylyl transferase"/>
    <property type="match status" value="1"/>
</dbReference>
<reference key="1">
    <citation type="journal article" date="2010" name="Stand. Genomic Sci.">
        <title>Complete genome sequence of Methanothermus fervidus type strain (V24S).</title>
        <authorList>
            <person name="Anderson I."/>
            <person name="Djao O.D."/>
            <person name="Misra M."/>
            <person name="Chertkov O."/>
            <person name="Nolan M."/>
            <person name="Lucas S."/>
            <person name="Lapidus A."/>
            <person name="Del Rio T.G."/>
            <person name="Tice H."/>
            <person name="Cheng J.F."/>
            <person name="Tapia R."/>
            <person name="Han C."/>
            <person name="Goodwin L."/>
            <person name="Pitluck S."/>
            <person name="Liolios K."/>
            <person name="Ivanova N."/>
            <person name="Mavromatis K."/>
            <person name="Mikhailova N."/>
            <person name="Pati A."/>
            <person name="Brambilla E."/>
            <person name="Chen A."/>
            <person name="Palaniappan K."/>
            <person name="Land M."/>
            <person name="Hauser L."/>
            <person name="Chang Y.J."/>
            <person name="Jeffries C.D."/>
            <person name="Sikorski J."/>
            <person name="Spring S."/>
            <person name="Rohde M."/>
            <person name="Eichinger K."/>
            <person name="Huber H."/>
            <person name="Wirth R."/>
            <person name="Goker M."/>
            <person name="Detter J.C."/>
            <person name="Woyke T."/>
            <person name="Bristow J."/>
            <person name="Eisen J.A."/>
            <person name="Markowitz V."/>
            <person name="Hugenholtz P."/>
            <person name="Klenk H.P."/>
            <person name="Kyrpides N.C."/>
        </authorList>
    </citation>
    <scope>NUCLEOTIDE SEQUENCE [LARGE SCALE GENOMIC DNA]</scope>
    <source>
        <strain>ATCC 43054 / DSM 2088 / JCM 10308 / V24 S</strain>
    </source>
</reference>
<name>RIBL_METFV</name>
<gene>
    <name evidence="1" type="primary">ribL</name>
    <name type="ordered locus">Mfer_1172</name>
</gene>
<proteinExistence type="inferred from homology"/>
<accession>E3GWN9</accession>
<comment type="function">
    <text evidence="1">Catalyzes the transfer of the AMP portion of ATP to flavin mononucleotide (FMN) to produce flavin adenine dinucleotide (FAD) coenzyme.</text>
</comment>
<comment type="catalytic activity">
    <reaction evidence="1">
        <text>FMN + ATP + H(+) = FAD + diphosphate</text>
        <dbReference type="Rhea" id="RHEA:17237"/>
        <dbReference type="ChEBI" id="CHEBI:15378"/>
        <dbReference type="ChEBI" id="CHEBI:30616"/>
        <dbReference type="ChEBI" id="CHEBI:33019"/>
        <dbReference type="ChEBI" id="CHEBI:57692"/>
        <dbReference type="ChEBI" id="CHEBI:58210"/>
        <dbReference type="EC" id="2.7.7.2"/>
    </reaction>
</comment>
<comment type="cofactor">
    <cofactor evidence="1">
        <name>a divalent metal cation</name>
        <dbReference type="ChEBI" id="CHEBI:60240"/>
    </cofactor>
</comment>
<comment type="pathway">
    <text evidence="1">Cofactor biosynthesis; FAD biosynthesis; FAD from FMN: step 1/1.</text>
</comment>
<comment type="subunit">
    <text evidence="1">Homodimer.</text>
</comment>
<comment type="similarity">
    <text evidence="1">Belongs to the archaeal FAD synthase family.</text>
</comment>
<feature type="chain" id="PRO_0000406275" description="FAD synthase">
    <location>
        <begin position="1"/>
        <end position="145"/>
    </location>
</feature>
<feature type="binding site" evidence="1">
    <location>
        <begin position="5"/>
        <end position="6"/>
    </location>
    <ligand>
        <name>ATP</name>
        <dbReference type="ChEBI" id="CHEBI:30616"/>
    </ligand>
</feature>
<feature type="binding site" evidence="1">
    <location>
        <begin position="10"/>
        <end position="13"/>
    </location>
    <ligand>
        <name>ATP</name>
        <dbReference type="ChEBI" id="CHEBI:30616"/>
    </ligand>
</feature>
<feature type="binding site" evidence="1">
    <location>
        <position position="92"/>
    </location>
    <ligand>
        <name>ATP</name>
        <dbReference type="ChEBI" id="CHEBI:30616"/>
    </ligand>
</feature>
<feature type="binding site" evidence="1">
    <location>
        <position position="119"/>
    </location>
    <ligand>
        <name>ATP</name>
        <dbReference type="ChEBI" id="CHEBI:30616"/>
    </ligand>
</feature>
<sequence>MATGTFDIIHPGHGFYLKKAKELGGKNSKLVVIVARDSTVRARKRKPVINEKQRLEVVKMLKPVDEAYLGCEGDIFKTVEKIKPDIIALGPDQDFDEKELQKELKKRNIDCKVVRIKEYKKSPLDSTCKIIKKIKQMKFDDIEKC</sequence>
<keyword id="KW-0067">ATP-binding</keyword>
<keyword id="KW-0274">FAD</keyword>
<keyword id="KW-0285">Flavoprotein</keyword>
<keyword id="KW-0288">FMN</keyword>
<keyword id="KW-0547">Nucleotide-binding</keyword>
<keyword id="KW-0548">Nucleotidyltransferase</keyword>
<keyword id="KW-1185">Reference proteome</keyword>
<keyword id="KW-0808">Transferase</keyword>
<organism>
    <name type="scientific">Methanothermus fervidus (strain ATCC 43054 / DSM 2088 / JCM 10308 / V24 S)</name>
    <dbReference type="NCBI Taxonomy" id="523846"/>
    <lineage>
        <taxon>Archaea</taxon>
        <taxon>Methanobacteriati</taxon>
        <taxon>Methanobacteriota</taxon>
        <taxon>Methanomada group</taxon>
        <taxon>Methanobacteria</taxon>
        <taxon>Methanobacteriales</taxon>
        <taxon>Methanothermaceae</taxon>
        <taxon>Methanothermus</taxon>
    </lineage>
</organism>
<protein>
    <recommendedName>
        <fullName evidence="1">FAD synthase</fullName>
        <ecNumber evidence="1">2.7.7.2</ecNumber>
    </recommendedName>
    <alternativeName>
        <fullName evidence="1">FMN adenylyltransferase</fullName>
    </alternativeName>
    <alternativeName>
        <fullName evidence="1">Flavin adenine dinucleotide synthase</fullName>
    </alternativeName>
</protein>
<evidence type="ECO:0000255" key="1">
    <source>
        <dbReference type="HAMAP-Rule" id="MF_02115"/>
    </source>
</evidence>